<name>PYRF_STAAB</name>
<feature type="chain" id="PRO_0000241910" description="Orotidine 5'-phosphate decarboxylase">
    <location>
        <begin position="1"/>
        <end position="230"/>
    </location>
</feature>
<feature type="active site" description="Proton donor" evidence="1">
    <location>
        <position position="60"/>
    </location>
</feature>
<feature type="binding site" evidence="1">
    <location>
        <position position="10"/>
    </location>
    <ligand>
        <name>substrate</name>
    </ligand>
</feature>
<feature type="binding site" evidence="1">
    <location>
        <position position="31"/>
    </location>
    <ligand>
        <name>substrate</name>
    </ligand>
</feature>
<feature type="binding site" evidence="1">
    <location>
        <begin position="58"/>
        <end position="67"/>
    </location>
    <ligand>
        <name>substrate</name>
    </ligand>
</feature>
<feature type="binding site" evidence="1">
    <location>
        <position position="117"/>
    </location>
    <ligand>
        <name>substrate</name>
    </ligand>
</feature>
<feature type="binding site" evidence="1">
    <location>
        <position position="179"/>
    </location>
    <ligand>
        <name>substrate</name>
    </ligand>
</feature>
<feature type="binding site" evidence="1">
    <location>
        <position position="188"/>
    </location>
    <ligand>
        <name>substrate</name>
    </ligand>
</feature>
<feature type="binding site" evidence="1">
    <location>
        <position position="208"/>
    </location>
    <ligand>
        <name>substrate</name>
    </ligand>
</feature>
<feature type="binding site" evidence="1">
    <location>
        <position position="209"/>
    </location>
    <ligand>
        <name>substrate</name>
    </ligand>
</feature>
<evidence type="ECO:0000255" key="1">
    <source>
        <dbReference type="HAMAP-Rule" id="MF_01200"/>
    </source>
</evidence>
<dbReference type="EC" id="4.1.1.23" evidence="1"/>
<dbReference type="EMBL" id="AJ938182">
    <property type="protein sequence ID" value="CAI80757.1"/>
    <property type="molecule type" value="Genomic_DNA"/>
</dbReference>
<dbReference type="RefSeq" id="WP_000654075.1">
    <property type="nucleotide sequence ID" value="NC_007622.1"/>
</dbReference>
<dbReference type="SMR" id="Q2YXG4"/>
<dbReference type="KEGG" id="sab:SAB1068"/>
<dbReference type="HOGENOM" id="CLU_067069_1_1_9"/>
<dbReference type="UniPathway" id="UPA00070">
    <property type="reaction ID" value="UER00120"/>
</dbReference>
<dbReference type="GO" id="GO:0005829">
    <property type="term" value="C:cytosol"/>
    <property type="evidence" value="ECO:0007669"/>
    <property type="project" value="TreeGrafter"/>
</dbReference>
<dbReference type="GO" id="GO:0004590">
    <property type="term" value="F:orotidine-5'-phosphate decarboxylase activity"/>
    <property type="evidence" value="ECO:0007669"/>
    <property type="project" value="UniProtKB-UniRule"/>
</dbReference>
<dbReference type="GO" id="GO:0006207">
    <property type="term" value="P:'de novo' pyrimidine nucleobase biosynthetic process"/>
    <property type="evidence" value="ECO:0007669"/>
    <property type="project" value="InterPro"/>
</dbReference>
<dbReference type="GO" id="GO:0044205">
    <property type="term" value="P:'de novo' UMP biosynthetic process"/>
    <property type="evidence" value="ECO:0007669"/>
    <property type="project" value="UniProtKB-UniRule"/>
</dbReference>
<dbReference type="CDD" id="cd04725">
    <property type="entry name" value="OMP_decarboxylase_like"/>
    <property type="match status" value="1"/>
</dbReference>
<dbReference type="FunFam" id="3.20.20.70:FF:000015">
    <property type="entry name" value="Orotidine 5'-phosphate decarboxylase"/>
    <property type="match status" value="1"/>
</dbReference>
<dbReference type="Gene3D" id="3.20.20.70">
    <property type="entry name" value="Aldolase class I"/>
    <property type="match status" value="1"/>
</dbReference>
<dbReference type="HAMAP" id="MF_01200_B">
    <property type="entry name" value="OMPdecase_type1_B"/>
    <property type="match status" value="1"/>
</dbReference>
<dbReference type="InterPro" id="IPR013785">
    <property type="entry name" value="Aldolase_TIM"/>
</dbReference>
<dbReference type="InterPro" id="IPR014732">
    <property type="entry name" value="OMPdecase"/>
</dbReference>
<dbReference type="InterPro" id="IPR018089">
    <property type="entry name" value="OMPdecase_AS"/>
</dbReference>
<dbReference type="InterPro" id="IPR047596">
    <property type="entry name" value="OMPdecase_bac"/>
</dbReference>
<dbReference type="InterPro" id="IPR001754">
    <property type="entry name" value="OMPdeCOase_dom"/>
</dbReference>
<dbReference type="InterPro" id="IPR011060">
    <property type="entry name" value="RibuloseP-bd_barrel"/>
</dbReference>
<dbReference type="NCBIfam" id="NF001273">
    <property type="entry name" value="PRK00230.1"/>
    <property type="match status" value="1"/>
</dbReference>
<dbReference type="NCBIfam" id="TIGR01740">
    <property type="entry name" value="pyrF"/>
    <property type="match status" value="1"/>
</dbReference>
<dbReference type="PANTHER" id="PTHR32119">
    <property type="entry name" value="OROTIDINE 5'-PHOSPHATE DECARBOXYLASE"/>
    <property type="match status" value="1"/>
</dbReference>
<dbReference type="PANTHER" id="PTHR32119:SF2">
    <property type="entry name" value="OROTIDINE 5'-PHOSPHATE DECARBOXYLASE"/>
    <property type="match status" value="1"/>
</dbReference>
<dbReference type="Pfam" id="PF00215">
    <property type="entry name" value="OMPdecase"/>
    <property type="match status" value="1"/>
</dbReference>
<dbReference type="SMART" id="SM00934">
    <property type="entry name" value="OMPdecase"/>
    <property type="match status" value="1"/>
</dbReference>
<dbReference type="SUPFAM" id="SSF51366">
    <property type="entry name" value="Ribulose-phoshate binding barrel"/>
    <property type="match status" value="1"/>
</dbReference>
<dbReference type="PROSITE" id="PS00156">
    <property type="entry name" value="OMPDECASE"/>
    <property type="match status" value="1"/>
</dbReference>
<accession>Q2YXG4</accession>
<organism>
    <name type="scientific">Staphylococcus aureus (strain bovine RF122 / ET3-1)</name>
    <dbReference type="NCBI Taxonomy" id="273036"/>
    <lineage>
        <taxon>Bacteria</taxon>
        <taxon>Bacillati</taxon>
        <taxon>Bacillota</taxon>
        <taxon>Bacilli</taxon>
        <taxon>Bacillales</taxon>
        <taxon>Staphylococcaceae</taxon>
        <taxon>Staphylococcus</taxon>
    </lineage>
</organism>
<protein>
    <recommendedName>
        <fullName evidence="1">Orotidine 5'-phosphate decarboxylase</fullName>
        <ecNumber evidence="1">4.1.1.23</ecNumber>
    </recommendedName>
    <alternativeName>
        <fullName evidence="1">OMP decarboxylase</fullName>
        <shortName evidence="1">OMPDCase</shortName>
        <shortName evidence="1">OMPdecase</shortName>
    </alternativeName>
</protein>
<proteinExistence type="inferred from homology"/>
<sequence>MKDLPIIALDFESKEKVNRFLDLFDESLFVKVGMELFYQEGPQLINEIKERGHDVFLDLKLHDIPNTVGKAMEGLAKLNVDLVNVHAAGGVKMMSEAIKGLRKHNEHTKIIAVTQLTSTTEDMLRHEQNIQTSIEEAVLNYAKLANATGLDGVVCSPLESRMLTEKLGASFLKVTPGIRPKGASQDDQHRITTPEEARQLGSTHIVVGRPITQSDNPVESYHKIKESWLV</sequence>
<comment type="function">
    <text evidence="1">Catalyzes the decarboxylation of orotidine 5'-monophosphate (OMP) to uridine 5'-monophosphate (UMP).</text>
</comment>
<comment type="catalytic activity">
    <reaction evidence="1">
        <text>orotidine 5'-phosphate + H(+) = UMP + CO2</text>
        <dbReference type="Rhea" id="RHEA:11596"/>
        <dbReference type="ChEBI" id="CHEBI:15378"/>
        <dbReference type="ChEBI" id="CHEBI:16526"/>
        <dbReference type="ChEBI" id="CHEBI:57538"/>
        <dbReference type="ChEBI" id="CHEBI:57865"/>
        <dbReference type="EC" id="4.1.1.23"/>
    </reaction>
</comment>
<comment type="pathway">
    <text evidence="1">Pyrimidine metabolism; UMP biosynthesis via de novo pathway; UMP from orotate: step 2/2.</text>
</comment>
<comment type="subunit">
    <text evidence="1">Homodimer.</text>
</comment>
<comment type="similarity">
    <text evidence="1">Belongs to the OMP decarboxylase family. Type 1 subfamily.</text>
</comment>
<reference key="1">
    <citation type="journal article" date="2007" name="PLoS ONE">
        <title>Molecular correlates of host specialization in Staphylococcus aureus.</title>
        <authorList>
            <person name="Herron-Olson L."/>
            <person name="Fitzgerald J.R."/>
            <person name="Musser J.M."/>
            <person name="Kapur V."/>
        </authorList>
    </citation>
    <scope>NUCLEOTIDE SEQUENCE [LARGE SCALE GENOMIC DNA]</scope>
    <source>
        <strain>bovine RF122 / ET3-1</strain>
    </source>
</reference>
<keyword id="KW-0210">Decarboxylase</keyword>
<keyword id="KW-0456">Lyase</keyword>
<keyword id="KW-0665">Pyrimidine biosynthesis</keyword>
<gene>
    <name evidence="1" type="primary">pyrF</name>
    <name type="ordered locus">SAB1068</name>
</gene>